<keyword id="KW-0150">Chloroplast</keyword>
<keyword id="KW-0903">Direct protein sequencing</keyword>
<keyword id="KW-0275">Fatty acid biosynthesis</keyword>
<keyword id="KW-0276">Fatty acid metabolism</keyword>
<keyword id="KW-0444">Lipid biosynthesis</keyword>
<keyword id="KW-0443">Lipid metabolism</keyword>
<keyword id="KW-0521">NADP</keyword>
<keyword id="KW-0560">Oxidoreductase</keyword>
<keyword id="KW-0934">Plastid</keyword>
<feature type="chain" id="PRO_0000054661" description="3-oxoacyl-[acyl-carrier-protein] reductase">
    <location>
        <begin position="1"/>
        <end position="201"/>
    </location>
</feature>
<feature type="active site" description="Proton acceptor" evidence="2">
    <location>
        <position position="108"/>
    </location>
</feature>
<feature type="binding site" evidence="1">
    <location>
        <position position="95"/>
    </location>
    <ligand>
        <name>substrate</name>
    </ligand>
</feature>
<feature type="non-consecutive residues" evidence="3">
    <location>
        <begin position="27"/>
        <end position="28"/>
    </location>
</feature>
<feature type="non-consecutive residues" evidence="3">
    <location>
        <begin position="34"/>
        <end position="35"/>
    </location>
</feature>
<feature type="non-consecutive residues" evidence="3">
    <location>
        <begin position="62"/>
        <end position="63"/>
    </location>
</feature>
<name>FABG6_BRANA</name>
<evidence type="ECO:0000250" key="1"/>
<evidence type="ECO:0000255" key="2">
    <source>
        <dbReference type="PROSITE-ProRule" id="PRU10001"/>
    </source>
</evidence>
<evidence type="ECO:0000305" key="3"/>
<comment type="catalytic activity">
    <reaction>
        <text>a (3R)-hydroxyacyl-[ACP] + NADP(+) = a 3-oxoacyl-[ACP] + NADPH + H(+)</text>
        <dbReference type="Rhea" id="RHEA:17397"/>
        <dbReference type="Rhea" id="RHEA-COMP:9916"/>
        <dbReference type="Rhea" id="RHEA-COMP:9945"/>
        <dbReference type="ChEBI" id="CHEBI:15378"/>
        <dbReference type="ChEBI" id="CHEBI:57783"/>
        <dbReference type="ChEBI" id="CHEBI:58349"/>
        <dbReference type="ChEBI" id="CHEBI:78776"/>
        <dbReference type="ChEBI" id="CHEBI:78827"/>
        <dbReference type="EC" id="1.1.1.100"/>
    </reaction>
</comment>
<comment type="pathway">
    <text>Lipid metabolism; fatty acid biosynthesis.</text>
</comment>
<comment type="subunit">
    <text evidence="3">Homotetramer.</text>
</comment>
<comment type="subcellular location">
    <subcellularLocation>
        <location>Plastid</location>
        <location>Chloroplast</location>
    </subcellularLocation>
    <text>And non-photosynthetic plastids.</text>
</comment>
<comment type="tissue specificity">
    <text>Embryo and leaf tissues.</text>
</comment>
<comment type="miscellaneous">
    <text>Exhibits a marked preference for acyl-carrier protein derivatives over CoA derivatives as substrates.</text>
</comment>
<comment type="similarity">
    <text evidence="3">Belongs to the short-chain dehydrogenases/reductases (SDR) family.</text>
</comment>
<accession>P27582</accession>
<dbReference type="EC" id="1.1.1.100"/>
<dbReference type="EMBL" id="X64463">
    <property type="protein sequence ID" value="CAA45793.1"/>
    <property type="molecule type" value="mRNA"/>
</dbReference>
<dbReference type="PIR" id="S22417">
    <property type="entry name" value="S22417"/>
</dbReference>
<dbReference type="UniPathway" id="UPA00094"/>
<dbReference type="GO" id="GO:0009507">
    <property type="term" value="C:chloroplast"/>
    <property type="evidence" value="ECO:0007669"/>
    <property type="project" value="UniProtKB-SubCell"/>
</dbReference>
<dbReference type="GO" id="GO:0004316">
    <property type="term" value="F:3-oxoacyl-[acyl-carrier-protein] reductase (NADPH) activity"/>
    <property type="evidence" value="ECO:0007669"/>
    <property type="project" value="UniProtKB-EC"/>
</dbReference>
<dbReference type="GO" id="GO:0006633">
    <property type="term" value="P:fatty acid biosynthetic process"/>
    <property type="evidence" value="ECO:0007669"/>
    <property type="project" value="UniProtKB-UniPathway"/>
</dbReference>
<dbReference type="Gene3D" id="3.40.50.720">
    <property type="entry name" value="NAD(P)-binding Rossmann-like Domain"/>
    <property type="match status" value="1"/>
</dbReference>
<dbReference type="InterPro" id="IPR036291">
    <property type="entry name" value="NAD(P)-bd_dom_sf"/>
</dbReference>
<dbReference type="InterPro" id="IPR020904">
    <property type="entry name" value="Sc_DH/Rdtase_CS"/>
</dbReference>
<dbReference type="InterPro" id="IPR050259">
    <property type="entry name" value="SDR"/>
</dbReference>
<dbReference type="InterPro" id="IPR002347">
    <property type="entry name" value="SDR_fam"/>
</dbReference>
<dbReference type="PANTHER" id="PTHR42879">
    <property type="entry name" value="3-OXOACYL-(ACYL-CARRIER-PROTEIN) REDUCTASE"/>
    <property type="match status" value="1"/>
</dbReference>
<dbReference type="PANTHER" id="PTHR42879:SF2">
    <property type="entry name" value="3-OXOACYL-[ACYL-CARRIER-PROTEIN] REDUCTASE FABG"/>
    <property type="match status" value="1"/>
</dbReference>
<dbReference type="Pfam" id="PF13561">
    <property type="entry name" value="adh_short_C2"/>
    <property type="match status" value="1"/>
</dbReference>
<dbReference type="PRINTS" id="PR00081">
    <property type="entry name" value="GDHRDH"/>
</dbReference>
<dbReference type="PRINTS" id="PR00080">
    <property type="entry name" value="SDRFAMILY"/>
</dbReference>
<dbReference type="SUPFAM" id="SSF51735">
    <property type="entry name" value="NAD(P)-binding Rossmann-fold domains"/>
    <property type="match status" value="1"/>
</dbReference>
<dbReference type="PROSITE" id="PS00061">
    <property type="entry name" value="ADH_SHORT"/>
    <property type="match status" value="1"/>
</dbReference>
<reference key="1">
    <citation type="journal article" date="1992" name="Biochim. Biophys. Acta">
        <title>3-oxoacyl-[ACP] reductase from oilseed rape (Brassica napus).</title>
        <authorList>
            <person name="Sheldon P.S."/>
            <person name="Kekwick R.G.O."/>
            <person name="Smith C.G."/>
            <person name="Sidebottom C.M."/>
            <person name="Slabas A.R."/>
        </authorList>
    </citation>
    <scope>PROTEIN SEQUENCE OF 35-62 AND 81-84</scope>
    <source>
        <tissue>Seed</tissue>
    </source>
</reference>
<reference key="2">
    <citation type="journal article" date="1992" name="Biochem. J.">
        <title>Molecular cloning of higher-plant 3-oxoacyl-(acyl carrier protein) reductase. Sequence identities with the nodG-gene product of the nitrogen-fixing soil bacterium Rhizobium meliloti.</title>
        <authorList>
            <person name="Slabas A.R."/>
            <person name="Chase D."/>
            <person name="Nishida I."/>
            <person name="Murata N."/>
            <person name="Sidebottom C.M."/>
            <person name="Safford R."/>
            <person name="Sheldon P.S."/>
            <person name="Kekwick R.G.O."/>
            <person name="Hardie D.G."/>
            <person name="Mackintosh R.W."/>
        </authorList>
    </citation>
    <scope>NUCLEOTIDE SEQUENCE [MRNA] OF 63-201</scope>
    <scope>PARTIAL PROTEIN SEQUENCE</scope>
    <source>
        <tissue>Seed</tissue>
    </source>
</reference>
<protein>
    <recommendedName>
        <fullName>3-oxoacyl-[acyl-carrier-protein] reductase</fullName>
        <ecNumber>1.1.1.100</ecNumber>
    </recommendedName>
    <alternativeName>
        <fullName>3-ketoacyl-acyl carrier protein reductase</fullName>
    </alternativeName>
</protein>
<proteinExistence type="evidence at protein level"/>
<organism>
    <name type="scientific">Brassica napus</name>
    <name type="common">Rape</name>
    <dbReference type="NCBI Taxonomy" id="3708"/>
    <lineage>
        <taxon>Eukaryota</taxon>
        <taxon>Viridiplantae</taxon>
        <taxon>Streptophyta</taxon>
        <taxon>Embryophyta</taxon>
        <taxon>Tracheophyta</taxon>
        <taxon>Spermatophyta</taxon>
        <taxon>Magnoliopsida</taxon>
        <taxon>eudicotyledons</taxon>
        <taxon>Gunneridae</taxon>
        <taxon>Pentapetalae</taxon>
        <taxon>rosids</taxon>
        <taxon>malvids</taxon>
        <taxon>Brassicales</taxon>
        <taxon>Brassicaceae</taxon>
        <taxon>Brassiceae</taxon>
        <taxon>Brassica</taxon>
    </lineage>
</organism>
<sequence length="201" mass="21047">ATAQEQPEGEAPDKVESPVVXXXEAXIVLVNYAREADVDAMMKDAVDYWGQIDVIANNAGITVIALNLTGVFLCSQAATKIMMKKRKGRIINIASVVGLIGNIGQANYAAAKAGVIGFSKTAAREGASRNINVNVVCPGFIASEMTAKLGEDMEKKILGTIPLGRYGQPEDVAGLVEFLALSPAASYITGQTFTIDGGIAI</sequence>